<organism>
    <name type="scientific">Gorilla gorilla gorilla</name>
    <name type="common">Western lowland gorilla</name>
    <dbReference type="NCBI Taxonomy" id="9595"/>
    <lineage>
        <taxon>Eukaryota</taxon>
        <taxon>Metazoa</taxon>
        <taxon>Chordata</taxon>
        <taxon>Craniata</taxon>
        <taxon>Vertebrata</taxon>
        <taxon>Euteleostomi</taxon>
        <taxon>Mammalia</taxon>
        <taxon>Eutheria</taxon>
        <taxon>Euarchontoglires</taxon>
        <taxon>Primates</taxon>
        <taxon>Haplorrhini</taxon>
        <taxon>Catarrhini</taxon>
        <taxon>Hominidae</taxon>
        <taxon>Gorilla</taxon>
    </lineage>
</organism>
<sequence length="67" mass="8105">MKLLLLTLTVLLLLSQLTPGGTQRCWNLYGKCRYRCSKKERVYVYCINNKMCCVKPKYQPKERWWPF</sequence>
<keyword id="KW-0044">Antibiotic</keyword>
<keyword id="KW-0929">Antimicrobial</keyword>
<keyword id="KW-0211">Defensin</keyword>
<keyword id="KW-1015">Disulfide bond</keyword>
<keyword id="KW-1185">Reference proteome</keyword>
<keyword id="KW-0964">Secreted</keyword>
<keyword id="KW-0732">Signal</keyword>
<dbReference type="EMBL" id="AM410140">
    <property type="protein sequence ID" value="CAL68955.1"/>
    <property type="molecule type" value="Genomic_DNA"/>
</dbReference>
<dbReference type="RefSeq" id="XP_004061994.1">
    <property type="nucleotide sequence ID" value="XM_004061946.1"/>
</dbReference>
<dbReference type="SMR" id="A4H235"/>
<dbReference type="STRING" id="9593.ENSGGOP00000000869"/>
<dbReference type="Ensembl" id="ENSGGOT00000000888.3">
    <property type="protein sequence ID" value="ENSGGOP00000000869.2"/>
    <property type="gene ID" value="ENSGGOG00000000884.3"/>
</dbReference>
<dbReference type="GeneID" id="101140157"/>
<dbReference type="KEGG" id="ggo:101140157"/>
<dbReference type="eggNOG" id="ENOG502TIGY">
    <property type="taxonomic scope" value="Eukaryota"/>
</dbReference>
<dbReference type="GeneTree" id="ENSGT00940000162385"/>
<dbReference type="HOGENOM" id="CLU_181906_2_0_1"/>
<dbReference type="InParanoid" id="A4H235"/>
<dbReference type="OMA" id="RCWNLHG"/>
<dbReference type="Proteomes" id="UP000001519">
    <property type="component" value="Chromosome 20"/>
</dbReference>
<dbReference type="Bgee" id="ENSGGOG00000000884">
    <property type="expression patterns" value="Expressed in testis and 1 other cell type or tissue"/>
</dbReference>
<dbReference type="GO" id="GO:0005576">
    <property type="term" value="C:extracellular region"/>
    <property type="evidence" value="ECO:0007669"/>
    <property type="project" value="UniProtKB-SubCell"/>
</dbReference>
<dbReference type="GO" id="GO:0050829">
    <property type="term" value="P:defense response to Gram-negative bacterium"/>
    <property type="evidence" value="ECO:0007669"/>
    <property type="project" value="UniProtKB-ARBA"/>
</dbReference>
<dbReference type="GO" id="GO:0045087">
    <property type="term" value="P:innate immune response"/>
    <property type="evidence" value="ECO:0007669"/>
    <property type="project" value="InterPro"/>
</dbReference>
<dbReference type="Gene3D" id="3.10.360.10">
    <property type="entry name" value="Antimicrobial Peptide, Beta-defensin 2, Chain A"/>
    <property type="match status" value="1"/>
</dbReference>
<dbReference type="InterPro" id="IPR050544">
    <property type="entry name" value="Beta-defensin"/>
</dbReference>
<dbReference type="InterPro" id="IPR025933">
    <property type="entry name" value="Beta_defensin_dom"/>
</dbReference>
<dbReference type="PANTHER" id="PTHR15001:SF3">
    <property type="entry name" value="BETA-DEFENSIN 123"/>
    <property type="match status" value="1"/>
</dbReference>
<dbReference type="PANTHER" id="PTHR15001">
    <property type="entry name" value="BETA-DEFENSIN 123-RELATED"/>
    <property type="match status" value="1"/>
</dbReference>
<dbReference type="Pfam" id="PF13841">
    <property type="entry name" value="Defensin_beta_2"/>
    <property type="match status" value="1"/>
</dbReference>
<proteinExistence type="inferred from homology"/>
<feature type="signal peptide" evidence="2">
    <location>
        <begin position="1"/>
        <end position="20"/>
    </location>
</feature>
<feature type="peptide" id="PRO_0000289838" description="Beta-defensin 123">
    <location>
        <begin position="21"/>
        <end position="67"/>
    </location>
</feature>
<feature type="disulfide bond" evidence="1">
    <location>
        <begin position="25"/>
        <end position="52"/>
    </location>
</feature>
<feature type="disulfide bond" evidence="1">
    <location>
        <begin position="32"/>
        <end position="46"/>
    </location>
</feature>
<feature type="disulfide bond" evidence="1">
    <location>
        <begin position="36"/>
        <end position="53"/>
    </location>
</feature>
<gene>
    <name type="primary">DEFB123</name>
</gene>
<protein>
    <recommendedName>
        <fullName>Beta-defensin 123</fullName>
    </recommendedName>
    <alternativeName>
        <fullName>Defensin, beta 123</fullName>
    </alternativeName>
</protein>
<reference key="1">
    <citation type="submission" date="2006-11" db="EMBL/GenBank/DDBJ databases">
        <title>Evolution and sequence variation of human beta-defensin genes.</title>
        <authorList>
            <person name="Hollox E.J."/>
            <person name="Armour J.A.L."/>
        </authorList>
    </citation>
    <scope>NUCLEOTIDE SEQUENCE [GENOMIC DNA]</scope>
</reference>
<comment type="function">
    <text evidence="3">Has antibacterial activity.</text>
</comment>
<comment type="subcellular location">
    <subcellularLocation>
        <location evidence="3">Secreted</location>
    </subcellularLocation>
</comment>
<comment type="similarity">
    <text evidence="3">Belongs to the beta-defensin family.</text>
</comment>
<accession>A4H235</accession>
<evidence type="ECO:0000250" key="1"/>
<evidence type="ECO:0000255" key="2"/>
<evidence type="ECO:0000305" key="3"/>
<name>DB123_GORGO</name>